<evidence type="ECO:0000250" key="1"/>
<evidence type="ECO:0000255" key="2">
    <source>
        <dbReference type="PROSITE-ProRule" id="PRU00179"/>
    </source>
</evidence>
<evidence type="ECO:0000255" key="3">
    <source>
        <dbReference type="PROSITE-ProRule" id="PRU00541"/>
    </source>
</evidence>
<evidence type="ECO:0000255" key="4">
    <source>
        <dbReference type="PROSITE-ProRule" id="PRU00542"/>
    </source>
</evidence>
<evidence type="ECO:0000256" key="5">
    <source>
        <dbReference type="SAM" id="MobiDB-lite"/>
    </source>
</evidence>
<evidence type="ECO:0000269" key="6">
    <source>
    </source>
</evidence>
<evidence type="ECO:0000305" key="7"/>
<reference key="1">
    <citation type="journal article" date="2002" name="Nature">
        <title>The genome sequence of Schizosaccharomyces pombe.</title>
        <authorList>
            <person name="Wood V."/>
            <person name="Gwilliam R."/>
            <person name="Rajandream M.A."/>
            <person name="Lyne M.H."/>
            <person name="Lyne R."/>
            <person name="Stewart A."/>
            <person name="Sgouros J.G."/>
            <person name="Peat N."/>
            <person name="Hayles J."/>
            <person name="Baker S.G."/>
            <person name="Basham D."/>
            <person name="Bowman S."/>
            <person name="Brooks K."/>
            <person name="Brown D."/>
            <person name="Brown S."/>
            <person name="Chillingworth T."/>
            <person name="Churcher C.M."/>
            <person name="Collins M."/>
            <person name="Connor R."/>
            <person name="Cronin A."/>
            <person name="Davis P."/>
            <person name="Feltwell T."/>
            <person name="Fraser A."/>
            <person name="Gentles S."/>
            <person name="Goble A."/>
            <person name="Hamlin N."/>
            <person name="Harris D.E."/>
            <person name="Hidalgo J."/>
            <person name="Hodgson G."/>
            <person name="Holroyd S."/>
            <person name="Hornsby T."/>
            <person name="Howarth S."/>
            <person name="Huckle E.J."/>
            <person name="Hunt S."/>
            <person name="Jagels K."/>
            <person name="James K.D."/>
            <person name="Jones L."/>
            <person name="Jones M."/>
            <person name="Leather S."/>
            <person name="McDonald S."/>
            <person name="McLean J."/>
            <person name="Mooney P."/>
            <person name="Moule S."/>
            <person name="Mungall K.L."/>
            <person name="Murphy L.D."/>
            <person name="Niblett D."/>
            <person name="Odell C."/>
            <person name="Oliver K."/>
            <person name="O'Neil S."/>
            <person name="Pearson D."/>
            <person name="Quail M.A."/>
            <person name="Rabbinowitsch E."/>
            <person name="Rutherford K.M."/>
            <person name="Rutter S."/>
            <person name="Saunders D."/>
            <person name="Seeger K."/>
            <person name="Sharp S."/>
            <person name="Skelton J."/>
            <person name="Simmonds M.N."/>
            <person name="Squares R."/>
            <person name="Squares S."/>
            <person name="Stevens K."/>
            <person name="Taylor K."/>
            <person name="Taylor R.G."/>
            <person name="Tivey A."/>
            <person name="Walsh S.V."/>
            <person name="Warren T."/>
            <person name="Whitehead S."/>
            <person name="Woodward J.R."/>
            <person name="Volckaert G."/>
            <person name="Aert R."/>
            <person name="Robben J."/>
            <person name="Grymonprez B."/>
            <person name="Weltjens I."/>
            <person name="Vanstreels E."/>
            <person name="Rieger M."/>
            <person name="Schaefer M."/>
            <person name="Mueller-Auer S."/>
            <person name="Gabel C."/>
            <person name="Fuchs M."/>
            <person name="Duesterhoeft A."/>
            <person name="Fritzc C."/>
            <person name="Holzer E."/>
            <person name="Moestl D."/>
            <person name="Hilbert H."/>
            <person name="Borzym K."/>
            <person name="Langer I."/>
            <person name="Beck A."/>
            <person name="Lehrach H."/>
            <person name="Reinhardt R."/>
            <person name="Pohl T.M."/>
            <person name="Eger P."/>
            <person name="Zimmermann W."/>
            <person name="Wedler H."/>
            <person name="Wambutt R."/>
            <person name="Purnelle B."/>
            <person name="Goffeau A."/>
            <person name="Cadieu E."/>
            <person name="Dreano S."/>
            <person name="Gloux S."/>
            <person name="Lelaure V."/>
            <person name="Mottier S."/>
            <person name="Galibert F."/>
            <person name="Aves S.J."/>
            <person name="Xiang Z."/>
            <person name="Hunt C."/>
            <person name="Moore K."/>
            <person name="Hurst S.M."/>
            <person name="Lucas M."/>
            <person name="Rochet M."/>
            <person name="Gaillardin C."/>
            <person name="Tallada V.A."/>
            <person name="Garzon A."/>
            <person name="Thode G."/>
            <person name="Daga R.R."/>
            <person name="Cruzado L."/>
            <person name="Jimenez J."/>
            <person name="Sanchez M."/>
            <person name="del Rey F."/>
            <person name="Benito J."/>
            <person name="Dominguez A."/>
            <person name="Revuelta J.L."/>
            <person name="Moreno S."/>
            <person name="Armstrong J."/>
            <person name="Forsburg S.L."/>
            <person name="Cerutti L."/>
            <person name="Lowe T."/>
            <person name="McCombie W.R."/>
            <person name="Paulsen I."/>
            <person name="Potashkin J."/>
            <person name="Shpakovski G.V."/>
            <person name="Ussery D."/>
            <person name="Barrell B.G."/>
            <person name="Nurse P."/>
        </authorList>
    </citation>
    <scope>NUCLEOTIDE SEQUENCE [LARGE SCALE GENOMIC DNA]</scope>
    <source>
        <strain>972 / ATCC 24843</strain>
    </source>
</reference>
<reference key="2">
    <citation type="journal article" date="2006" name="Nat. Biotechnol.">
        <title>ORFeome cloning and global analysis of protein localization in the fission yeast Schizosaccharomyces pombe.</title>
        <authorList>
            <person name="Matsuyama A."/>
            <person name="Arai R."/>
            <person name="Yashiroda Y."/>
            <person name="Shirai A."/>
            <person name="Kamata A."/>
            <person name="Sekido S."/>
            <person name="Kobayashi Y."/>
            <person name="Hashimoto A."/>
            <person name="Hamamoto M."/>
            <person name="Hiraoka Y."/>
            <person name="Horinouchi S."/>
            <person name="Yoshida M."/>
        </authorList>
    </citation>
    <scope>SUBCELLULAR LOCATION [LARGE SCALE ANALYSIS]</scope>
</reference>
<comment type="function">
    <text evidence="1">Probable ATP-binding RNA helicase.</text>
</comment>
<comment type="catalytic activity">
    <reaction>
        <text>ATP + H2O = ADP + phosphate + H(+)</text>
        <dbReference type="Rhea" id="RHEA:13065"/>
        <dbReference type="ChEBI" id="CHEBI:15377"/>
        <dbReference type="ChEBI" id="CHEBI:15378"/>
        <dbReference type="ChEBI" id="CHEBI:30616"/>
        <dbReference type="ChEBI" id="CHEBI:43474"/>
        <dbReference type="ChEBI" id="CHEBI:456216"/>
        <dbReference type="EC" id="3.6.4.13"/>
    </reaction>
</comment>
<comment type="subcellular location">
    <subcellularLocation>
        <location evidence="6">Cytoplasm</location>
    </subcellularLocation>
</comment>
<comment type="similarity">
    <text evidence="7">Belongs to the DEAD box helicase family. DEAH subfamily.</text>
</comment>
<sequence>MGSKGKKGKSSEVNLETSKNKEKNIKGKKKNSLDPIEKNKQETAGLQTTSRPTAKQLVGGSSWTGKIPVVLLNEHCQRSKWEKSDVKVRQTKSKNYIFTSVVLAKKDPKNPSILDHVSLIPPKSYYENGYFPEKETLVEARNVGAVYALHRIMSHKSLQHALPPEHRNIWFDMEKQKKEELKNKHSWLYNEDPFKAAKELQAARASSAAKPPPKASQKNEKVSLTSIKNTSLSHFSKFNFKYALPIHMSLENRRSLENLFRNMNTWDILEDTKNLEPDTSIVNDLISLGFRDIHAKEACQYCVSLEDALEWLIIHVPEDDLPTRFLPSDYTTGISVQNLNSANLAIHYNAKRISETGYSFDLCFSTLQTFENNIQISSEYLQQHLIGESFDGNISLEPNSTEWDDDVSALQSILDNKVSKIENGCRVRIDYPTSEFGELFVDFRRPARSYPAHIPLMSLSSTKRMASYIKLSILKKMVVYAMDLRGECMLSWLYNHLQENIEDFLQNIGSLLNISAATIGVSLSSQNKSAPTAKKNNSFKPKLFRRSRELSEKLCNNWSERVKSPSYQLKVREREKLPAWESRRKIMDAIQHSQVVVISGETGSGKSTQVVQFILDHYLSSGEKDLQTVVCTQPRRISAISLAERVAFERDTTVGKEVGYSVHGEKSISKETLLEFCTTGLLLRRIQQHGLGFLSTLSCVVVDEVHERSIENDILLTLLKLVISRIPNLKVILMSATVNSDTFKYYFGNAGHLHIHGRTFPIKDYYIEDFAPKLNEDDDEEDVPRRKKKEYEIDYHLISRLVSSIDAELGSSSGSILVFLPGVSNIARCIREIKSKDGSKFEVLPLHASLNTSEQRRCFKTYTKRKIICATNIAETSITIDDVVAVIDSGRVKQIDYDVERDLVTFKETWASRAACQQRRGRAGRVKKGICYKLYTRGFEEKGMLGQTPPEVLRTALSQVCLNVVPLVKRFSSAGNSVNQGSIKKFMNSLIDPPNDATVDLALKKLIQVGALTVSEDLTGLGEYLVSLPIDLKLGKLLVFGSIFGYLEPALTITAILSTKSPFLGDDEAREIRSKQSQGWGDVLADARVYHNWLEILETRGVKKTVQWCEEMHLHYTTLQQIRQNRNELSEAAQLLELTTKKLTGNFDWYSTENLTVLSTLIAAALSPNVVKCVYPDKKFVASFSGSLEMEQEARLTKFYDQNNQRLFIHPSSTMFVNSPNASRCTFVAYEQKVETTKPFLRNCTPINTYGMILLGANDILIDPLGKGLILDQAYCIKAWPKVVILLKMLKRCLDASLHERLESSSGLNYESEIHQCIRTLIAGNGV</sequence>
<feature type="chain" id="PRO_0000314097" description="Putative ATP-dependent RNA helicase ucp12">
    <location>
        <begin position="1"/>
        <end position="1327"/>
    </location>
</feature>
<feature type="domain" description="UBA">
    <location>
        <begin position="276"/>
        <end position="315"/>
    </location>
</feature>
<feature type="domain" description="RWD" evidence="2">
    <location>
        <begin position="405"/>
        <end position="504"/>
    </location>
</feature>
<feature type="domain" description="Helicase ATP-binding" evidence="3">
    <location>
        <begin position="587"/>
        <end position="756"/>
    </location>
</feature>
<feature type="domain" description="Helicase C-terminal" evidence="4">
    <location>
        <begin position="797"/>
        <end position="968"/>
    </location>
</feature>
<feature type="region of interest" description="Disordered" evidence="5">
    <location>
        <begin position="1"/>
        <end position="58"/>
    </location>
</feature>
<feature type="region of interest" description="Disordered" evidence="5">
    <location>
        <begin position="201"/>
        <end position="222"/>
    </location>
</feature>
<feature type="short sequence motif" description="DEAH box">
    <location>
        <begin position="703"/>
        <end position="706"/>
    </location>
</feature>
<feature type="compositionally biased region" description="Basic and acidic residues" evidence="5">
    <location>
        <begin position="18"/>
        <end position="41"/>
    </location>
</feature>
<feature type="compositionally biased region" description="Polar residues" evidence="5">
    <location>
        <begin position="42"/>
        <end position="58"/>
    </location>
</feature>
<feature type="binding site" evidence="3">
    <location>
        <begin position="600"/>
        <end position="607"/>
    </location>
    <ligand>
        <name>ATP</name>
        <dbReference type="ChEBI" id="CHEBI:30616"/>
    </ligand>
</feature>
<keyword id="KW-0067">ATP-binding</keyword>
<keyword id="KW-0963">Cytoplasm</keyword>
<keyword id="KW-0347">Helicase</keyword>
<keyword id="KW-0378">Hydrolase</keyword>
<keyword id="KW-0547">Nucleotide-binding</keyword>
<keyword id="KW-1185">Reference proteome</keyword>
<protein>
    <recommendedName>
        <fullName>Putative ATP-dependent RNA helicase ucp12</fullName>
        <ecNumber>3.6.4.13</ecNumber>
    </recommendedName>
</protein>
<proteinExistence type="inferred from homology"/>
<name>UCP12_SCHPO</name>
<gene>
    <name type="primary">ucp12</name>
    <name type="ORF">SPCC895.09c</name>
</gene>
<dbReference type="EC" id="3.6.4.13"/>
<dbReference type="EMBL" id="CU329672">
    <property type="protein sequence ID" value="CAA22845.1"/>
    <property type="molecule type" value="Genomic_DNA"/>
</dbReference>
<dbReference type="PIR" id="T41647">
    <property type="entry name" value="T41647"/>
</dbReference>
<dbReference type="RefSeq" id="NP_588050.1">
    <property type="nucleotide sequence ID" value="NM_001023042.2"/>
</dbReference>
<dbReference type="SMR" id="O94536"/>
<dbReference type="BioGRID" id="275833">
    <property type="interactions" value="16"/>
</dbReference>
<dbReference type="FunCoup" id="O94536">
    <property type="interactions" value="561"/>
</dbReference>
<dbReference type="STRING" id="284812.O94536"/>
<dbReference type="iPTMnet" id="O94536"/>
<dbReference type="PaxDb" id="4896-SPCC895.09c.1"/>
<dbReference type="EnsemblFungi" id="SPCC895.09c.1">
    <property type="protein sequence ID" value="SPCC895.09c.1:pep"/>
    <property type="gene ID" value="SPCC895.09c"/>
</dbReference>
<dbReference type="GeneID" id="2539263"/>
<dbReference type="KEGG" id="spo:2539263"/>
<dbReference type="PomBase" id="SPCC895.09c">
    <property type="gene designation" value="ucp12"/>
</dbReference>
<dbReference type="VEuPathDB" id="FungiDB:SPCC895.09c"/>
<dbReference type="eggNOG" id="KOG0920">
    <property type="taxonomic scope" value="Eukaryota"/>
</dbReference>
<dbReference type="HOGENOM" id="CLU_001832_4_0_1"/>
<dbReference type="InParanoid" id="O94536"/>
<dbReference type="OMA" id="LFRVCNM"/>
<dbReference type="PhylomeDB" id="O94536"/>
<dbReference type="PRO" id="PR:O94536"/>
<dbReference type="Proteomes" id="UP000002485">
    <property type="component" value="Chromosome III"/>
</dbReference>
<dbReference type="GO" id="GO:0005829">
    <property type="term" value="C:cytosol"/>
    <property type="evidence" value="ECO:0007005"/>
    <property type="project" value="PomBase"/>
</dbReference>
<dbReference type="GO" id="GO:0005681">
    <property type="term" value="C:spliceosomal complex"/>
    <property type="evidence" value="ECO:0007669"/>
    <property type="project" value="UniProtKB-ARBA"/>
</dbReference>
<dbReference type="GO" id="GO:0005524">
    <property type="term" value="F:ATP binding"/>
    <property type="evidence" value="ECO:0007669"/>
    <property type="project" value="UniProtKB-KW"/>
</dbReference>
<dbReference type="GO" id="GO:0016887">
    <property type="term" value="F:ATP hydrolysis activity"/>
    <property type="evidence" value="ECO:0007669"/>
    <property type="project" value="RHEA"/>
</dbReference>
<dbReference type="GO" id="GO:0004386">
    <property type="term" value="F:helicase activity"/>
    <property type="evidence" value="ECO:0000318"/>
    <property type="project" value="GO_Central"/>
</dbReference>
<dbReference type="GO" id="GO:0003729">
    <property type="term" value="F:mRNA binding"/>
    <property type="evidence" value="ECO:0000266"/>
    <property type="project" value="PomBase"/>
</dbReference>
<dbReference type="GO" id="GO:0003723">
    <property type="term" value="F:RNA binding"/>
    <property type="evidence" value="ECO:0000318"/>
    <property type="project" value="GO_Central"/>
</dbReference>
<dbReference type="GO" id="GO:0003724">
    <property type="term" value="F:RNA helicase activity"/>
    <property type="evidence" value="ECO:0000250"/>
    <property type="project" value="PomBase"/>
</dbReference>
<dbReference type="CDD" id="cd17917">
    <property type="entry name" value="DEXHc_RHA-like"/>
    <property type="match status" value="1"/>
</dbReference>
<dbReference type="CDD" id="cd23827">
    <property type="entry name" value="RWD_YLR419W-like"/>
    <property type="match status" value="1"/>
</dbReference>
<dbReference type="CDD" id="cd18791">
    <property type="entry name" value="SF2_C_RHA"/>
    <property type="match status" value="1"/>
</dbReference>
<dbReference type="Gene3D" id="1.20.120.1080">
    <property type="match status" value="1"/>
</dbReference>
<dbReference type="Gene3D" id="1.10.8.10">
    <property type="entry name" value="DNA helicase RuvA subunit, C-terminal domain"/>
    <property type="match status" value="1"/>
</dbReference>
<dbReference type="Gene3D" id="3.40.50.300">
    <property type="entry name" value="P-loop containing nucleotide triphosphate hydrolases"/>
    <property type="match status" value="2"/>
</dbReference>
<dbReference type="Gene3D" id="3.10.110.10">
    <property type="entry name" value="Ubiquitin Conjugating Enzyme"/>
    <property type="match status" value="1"/>
</dbReference>
<dbReference type="InterPro" id="IPR011709">
    <property type="entry name" value="DEAD-box_helicase_OB_fold"/>
</dbReference>
<dbReference type="InterPro" id="IPR011545">
    <property type="entry name" value="DEAD/DEAH_box_helicase_dom"/>
</dbReference>
<dbReference type="InterPro" id="IPR002464">
    <property type="entry name" value="DNA/RNA_helicase_DEAH_CS"/>
</dbReference>
<dbReference type="InterPro" id="IPR056328">
    <property type="entry name" value="DSRM_DHX29"/>
</dbReference>
<dbReference type="InterPro" id="IPR007502">
    <property type="entry name" value="Helicase-assoc_dom"/>
</dbReference>
<dbReference type="InterPro" id="IPR014001">
    <property type="entry name" value="Helicase_ATP-bd"/>
</dbReference>
<dbReference type="InterPro" id="IPR001650">
    <property type="entry name" value="Helicase_C-like"/>
</dbReference>
<dbReference type="InterPro" id="IPR027417">
    <property type="entry name" value="P-loop_NTPase"/>
</dbReference>
<dbReference type="InterPro" id="IPR006575">
    <property type="entry name" value="RWD_dom"/>
</dbReference>
<dbReference type="InterPro" id="IPR015940">
    <property type="entry name" value="UBA"/>
</dbReference>
<dbReference type="InterPro" id="IPR009060">
    <property type="entry name" value="UBA-like_sf"/>
</dbReference>
<dbReference type="InterPro" id="IPR016135">
    <property type="entry name" value="UBQ-conjugating_enzyme/RWD"/>
</dbReference>
<dbReference type="PANTHER" id="PTHR18934">
    <property type="entry name" value="ATP-DEPENDENT RNA HELICASE"/>
    <property type="match status" value="1"/>
</dbReference>
<dbReference type="PANTHER" id="PTHR18934:SF267">
    <property type="entry name" value="ATP-DEPENDENT RNA HELICASE YLR419W-RELATED"/>
    <property type="match status" value="1"/>
</dbReference>
<dbReference type="Pfam" id="PF00270">
    <property type="entry name" value="DEAD"/>
    <property type="match status" value="1"/>
</dbReference>
<dbReference type="Pfam" id="PF24385">
    <property type="entry name" value="DSRM_DHX29"/>
    <property type="match status" value="1"/>
</dbReference>
<dbReference type="Pfam" id="PF21010">
    <property type="entry name" value="HA2_C"/>
    <property type="match status" value="1"/>
</dbReference>
<dbReference type="Pfam" id="PF00271">
    <property type="entry name" value="Helicase_C"/>
    <property type="match status" value="1"/>
</dbReference>
<dbReference type="Pfam" id="PF07717">
    <property type="entry name" value="OB_NTP_bind"/>
    <property type="match status" value="1"/>
</dbReference>
<dbReference type="Pfam" id="PF05773">
    <property type="entry name" value="RWD"/>
    <property type="match status" value="1"/>
</dbReference>
<dbReference type="Pfam" id="PF00627">
    <property type="entry name" value="UBA"/>
    <property type="match status" value="1"/>
</dbReference>
<dbReference type="SMART" id="SM00487">
    <property type="entry name" value="DEXDc"/>
    <property type="match status" value="1"/>
</dbReference>
<dbReference type="SMART" id="SM00847">
    <property type="entry name" value="HA2"/>
    <property type="match status" value="1"/>
</dbReference>
<dbReference type="SMART" id="SM00490">
    <property type="entry name" value="HELICc"/>
    <property type="match status" value="1"/>
</dbReference>
<dbReference type="SMART" id="SM00591">
    <property type="entry name" value="RWD"/>
    <property type="match status" value="1"/>
</dbReference>
<dbReference type="SUPFAM" id="SSF52540">
    <property type="entry name" value="P-loop containing nucleoside triphosphate hydrolases"/>
    <property type="match status" value="1"/>
</dbReference>
<dbReference type="SUPFAM" id="SSF46934">
    <property type="entry name" value="UBA-like"/>
    <property type="match status" value="1"/>
</dbReference>
<dbReference type="SUPFAM" id="SSF54495">
    <property type="entry name" value="UBC-like"/>
    <property type="match status" value="1"/>
</dbReference>
<dbReference type="PROSITE" id="PS00690">
    <property type="entry name" value="DEAH_ATP_HELICASE"/>
    <property type="match status" value="1"/>
</dbReference>
<dbReference type="PROSITE" id="PS51192">
    <property type="entry name" value="HELICASE_ATP_BIND_1"/>
    <property type="match status" value="1"/>
</dbReference>
<dbReference type="PROSITE" id="PS51194">
    <property type="entry name" value="HELICASE_CTER"/>
    <property type="match status" value="1"/>
</dbReference>
<dbReference type="PROSITE" id="PS50908">
    <property type="entry name" value="RWD"/>
    <property type="match status" value="1"/>
</dbReference>
<accession>O94536</accession>
<organism>
    <name type="scientific">Schizosaccharomyces pombe (strain 972 / ATCC 24843)</name>
    <name type="common">Fission yeast</name>
    <dbReference type="NCBI Taxonomy" id="284812"/>
    <lineage>
        <taxon>Eukaryota</taxon>
        <taxon>Fungi</taxon>
        <taxon>Dikarya</taxon>
        <taxon>Ascomycota</taxon>
        <taxon>Taphrinomycotina</taxon>
        <taxon>Schizosaccharomycetes</taxon>
        <taxon>Schizosaccharomycetales</taxon>
        <taxon>Schizosaccharomycetaceae</taxon>
        <taxon>Schizosaccharomyces</taxon>
    </lineage>
</organism>